<evidence type="ECO:0000255" key="1">
    <source>
        <dbReference type="HAMAP-Rule" id="MF_00038"/>
    </source>
</evidence>
<feature type="chain" id="PRO_0000108937" description="Putative phospho-N-acetylmuramoyl-pentapeptide-transferase">
    <location>
        <begin position="1"/>
        <end position="351"/>
    </location>
</feature>
<feature type="transmembrane region" description="Helical" evidence="1">
    <location>
        <begin position="2"/>
        <end position="22"/>
    </location>
</feature>
<feature type="transmembrane region" description="Helical" evidence="1">
    <location>
        <begin position="44"/>
        <end position="64"/>
    </location>
</feature>
<feature type="transmembrane region" description="Helical" evidence="1">
    <location>
        <begin position="71"/>
        <end position="91"/>
    </location>
</feature>
<feature type="transmembrane region" description="Helical" evidence="1">
    <location>
        <begin position="158"/>
        <end position="178"/>
    </location>
</feature>
<feature type="transmembrane region" description="Helical" evidence="1">
    <location>
        <begin position="181"/>
        <end position="201"/>
    </location>
</feature>
<feature type="transmembrane region" description="Helical" evidence="1">
    <location>
        <begin position="212"/>
        <end position="232"/>
    </location>
</feature>
<feature type="transmembrane region" description="Helical" evidence="1">
    <location>
        <begin position="235"/>
        <end position="255"/>
    </location>
</feature>
<feature type="transmembrane region" description="Helical" evidence="1">
    <location>
        <begin position="258"/>
        <end position="278"/>
    </location>
</feature>
<feature type="transmembrane region" description="Helical" evidence="1">
    <location>
        <begin position="281"/>
        <end position="301"/>
    </location>
</feature>
<feature type="transmembrane region" description="Helical" evidence="1">
    <location>
        <begin position="328"/>
        <end position="348"/>
    </location>
</feature>
<accession>O26830</accession>
<comment type="catalytic activity">
    <reaction evidence="1">
        <text>UDP-N-acetyl-alpha-D-muramoyl-L-alanyl-gamma-D-glutamyl-meso-2,6-diaminopimeloyl-D-alanyl-D-alanine + di-trans,octa-cis-undecaprenyl phosphate = di-trans,octa-cis-undecaprenyl diphospho-N-acetyl-alpha-D-muramoyl-L-alanyl-D-glutamyl-meso-2,6-diaminopimeloyl-D-alanyl-D-alanine + UMP</text>
        <dbReference type="Rhea" id="RHEA:28386"/>
        <dbReference type="ChEBI" id="CHEBI:57865"/>
        <dbReference type="ChEBI" id="CHEBI:60392"/>
        <dbReference type="ChEBI" id="CHEBI:61386"/>
        <dbReference type="ChEBI" id="CHEBI:61387"/>
        <dbReference type="EC" id="2.7.8.13"/>
    </reaction>
</comment>
<comment type="cofactor">
    <cofactor evidence="1">
        <name>Mg(2+)</name>
        <dbReference type="ChEBI" id="CHEBI:18420"/>
    </cofactor>
</comment>
<comment type="subcellular location">
    <subcellularLocation>
        <location evidence="1">Cell membrane</location>
        <topology evidence="1">Multi-pass membrane protein</topology>
    </subcellularLocation>
</comment>
<comment type="similarity">
    <text evidence="1">Belongs to the glycosyltransferase 4 family. MraY subfamily.</text>
</comment>
<reference key="1">
    <citation type="journal article" date="1997" name="J. Bacteriol.">
        <title>Complete genome sequence of Methanobacterium thermoautotrophicum deltaH: functional analysis and comparative genomics.</title>
        <authorList>
            <person name="Smith D.R."/>
            <person name="Doucette-Stamm L.A."/>
            <person name="Deloughery C."/>
            <person name="Lee H.-M."/>
            <person name="Dubois J."/>
            <person name="Aldredge T."/>
            <person name="Bashirzadeh R."/>
            <person name="Blakely D."/>
            <person name="Cook R."/>
            <person name="Gilbert K."/>
            <person name="Harrison D."/>
            <person name="Hoang L."/>
            <person name="Keagle P."/>
            <person name="Lumm W."/>
            <person name="Pothier B."/>
            <person name="Qiu D."/>
            <person name="Spadafora R."/>
            <person name="Vicare R."/>
            <person name="Wang Y."/>
            <person name="Wierzbowski J."/>
            <person name="Gibson R."/>
            <person name="Jiwani N."/>
            <person name="Caruso A."/>
            <person name="Bush D."/>
            <person name="Safer H."/>
            <person name="Patwell D."/>
            <person name="Prabhakar S."/>
            <person name="McDougall S."/>
            <person name="Shimer G."/>
            <person name="Goyal A."/>
            <person name="Pietrovski S."/>
            <person name="Church G.M."/>
            <person name="Daniels C.J."/>
            <person name="Mao J.-I."/>
            <person name="Rice P."/>
            <person name="Noelling J."/>
            <person name="Reeve J.N."/>
        </authorList>
    </citation>
    <scope>NUCLEOTIDE SEQUENCE [LARGE SCALE GENOMIC DNA]</scope>
    <source>
        <strain>ATCC 29096 / DSM 1053 / JCM 10044 / NBRC 100330 / Delta H</strain>
    </source>
</reference>
<gene>
    <name type="ordered locus">MTH_735</name>
</gene>
<proteinExistence type="inferred from homology"/>
<protein>
    <recommendedName>
        <fullName evidence="1">Putative phospho-N-acetylmuramoyl-pentapeptide-transferase</fullName>
        <ecNumber evidence="1">2.7.8.13</ecNumber>
    </recommendedName>
    <alternativeName>
        <fullName evidence="1">UDP-MurNAc-pentapeptide phosphotransferase</fullName>
    </alternativeName>
</protein>
<dbReference type="EC" id="2.7.8.13" evidence="1"/>
<dbReference type="EMBL" id="AE000666">
    <property type="protein sequence ID" value="AAB85239.1"/>
    <property type="molecule type" value="Genomic_DNA"/>
</dbReference>
<dbReference type="PIR" id="C69198">
    <property type="entry name" value="C69198"/>
</dbReference>
<dbReference type="RefSeq" id="WP_010876374.1">
    <property type="nucleotide sequence ID" value="NC_000916.1"/>
</dbReference>
<dbReference type="SMR" id="O26830"/>
<dbReference type="STRING" id="187420.MTH_735"/>
<dbReference type="PaxDb" id="187420-MTH_735"/>
<dbReference type="EnsemblBacteria" id="AAB85239">
    <property type="protein sequence ID" value="AAB85239"/>
    <property type="gene ID" value="MTH_735"/>
</dbReference>
<dbReference type="KEGG" id="mth:MTH_735"/>
<dbReference type="PATRIC" id="fig|187420.15.peg.722"/>
<dbReference type="HOGENOM" id="CLU_023982_0_1_2"/>
<dbReference type="InParanoid" id="O26830"/>
<dbReference type="Proteomes" id="UP000005223">
    <property type="component" value="Chromosome"/>
</dbReference>
<dbReference type="GO" id="GO:0005886">
    <property type="term" value="C:plasma membrane"/>
    <property type="evidence" value="ECO:0007669"/>
    <property type="project" value="UniProtKB-SubCell"/>
</dbReference>
<dbReference type="GO" id="GO:0046872">
    <property type="term" value="F:metal ion binding"/>
    <property type="evidence" value="ECO:0007669"/>
    <property type="project" value="UniProtKB-KW"/>
</dbReference>
<dbReference type="GO" id="GO:0008963">
    <property type="term" value="F:phospho-N-acetylmuramoyl-pentapeptide-transferase activity"/>
    <property type="evidence" value="ECO:0007669"/>
    <property type="project" value="UniProtKB-UniRule"/>
</dbReference>
<dbReference type="GO" id="GO:0051992">
    <property type="term" value="F:UDP-N-acetylmuramoyl-L-alanyl-D-glutamyl-meso-2,6-diaminopimelyl-D-alanyl-D-alanine:undecaprenyl-phosphate transferase activity"/>
    <property type="evidence" value="ECO:0007669"/>
    <property type="project" value="RHEA"/>
</dbReference>
<dbReference type="GO" id="GO:0044038">
    <property type="term" value="P:cell wall macromolecule biosynthetic process"/>
    <property type="evidence" value="ECO:0007669"/>
    <property type="project" value="TreeGrafter"/>
</dbReference>
<dbReference type="GO" id="GO:0071555">
    <property type="term" value="P:cell wall organization"/>
    <property type="evidence" value="ECO:0007669"/>
    <property type="project" value="TreeGrafter"/>
</dbReference>
<dbReference type="CDD" id="cd06499">
    <property type="entry name" value="GT_MraY-like"/>
    <property type="match status" value="1"/>
</dbReference>
<dbReference type="HAMAP" id="MF_00038">
    <property type="entry name" value="MraY"/>
    <property type="match status" value="1"/>
</dbReference>
<dbReference type="InterPro" id="IPR000715">
    <property type="entry name" value="Glycosyl_transferase_4"/>
</dbReference>
<dbReference type="InterPro" id="IPR003524">
    <property type="entry name" value="PNAcMuramoyl-5peptid_Trfase"/>
</dbReference>
<dbReference type="InterPro" id="IPR018480">
    <property type="entry name" value="PNAcMuramoyl-5peptid_Trfase_CS"/>
</dbReference>
<dbReference type="PANTHER" id="PTHR22926">
    <property type="entry name" value="PHOSPHO-N-ACETYLMURAMOYL-PENTAPEPTIDE-TRANSFERASE"/>
    <property type="match status" value="1"/>
</dbReference>
<dbReference type="PANTHER" id="PTHR22926:SF3">
    <property type="entry name" value="UNDECAPRENYL-PHOSPHATE ALPHA-N-ACETYLGLUCOSAMINYL 1-PHOSPHATE TRANSFERASE"/>
    <property type="match status" value="1"/>
</dbReference>
<dbReference type="Pfam" id="PF00953">
    <property type="entry name" value="Glycos_transf_4"/>
    <property type="match status" value="1"/>
</dbReference>
<dbReference type="PROSITE" id="PS01347">
    <property type="entry name" value="MRAY_1"/>
    <property type="match status" value="1"/>
</dbReference>
<dbReference type="PROSITE" id="PS01348">
    <property type="entry name" value="MRAY_2"/>
    <property type="match status" value="1"/>
</dbReference>
<sequence>MMEFLMVFIISTVSAAVFTLFIRNILRSADIGDKPIVTEHSHKAGTPTMGGLGMLLALLLVTVLYRNNPYLVLTSLIVLTAAIVGLLDDLLGLKVKEVQRIIRNVSEGPLEVGQLVLKPGEEARAATDKAKRDVEALLSEGLVEVVGEAPIKNEVSEGEKILAQLLIGVFLVLSGAVGKLGGFYLGLAAAPIAIAGMVGAINAVNLIDGMDGMAAGIMLIASLSCAIFLGLSGQALPFLALAGMCAGFLVFNRHPASIFMGDTGSFALGAGYATAVMLTDTVYFGVLAIAVPVVSVIVSLLHRAGVIRLPVEPLHHTLHYRGMSERRIVLLYWLITLIVCALGLYMTGSIL</sequence>
<organism>
    <name type="scientific">Methanothermobacter thermautotrophicus (strain ATCC 29096 / DSM 1053 / JCM 10044 / NBRC 100330 / Delta H)</name>
    <name type="common">Methanobacterium thermoautotrophicum</name>
    <dbReference type="NCBI Taxonomy" id="187420"/>
    <lineage>
        <taxon>Archaea</taxon>
        <taxon>Methanobacteriati</taxon>
        <taxon>Methanobacteriota</taxon>
        <taxon>Methanomada group</taxon>
        <taxon>Methanobacteria</taxon>
        <taxon>Methanobacteriales</taxon>
        <taxon>Methanobacteriaceae</taxon>
        <taxon>Methanothermobacter</taxon>
    </lineage>
</organism>
<name>MRAY_METTH</name>
<keyword id="KW-1003">Cell membrane</keyword>
<keyword id="KW-0460">Magnesium</keyword>
<keyword id="KW-0472">Membrane</keyword>
<keyword id="KW-0479">Metal-binding</keyword>
<keyword id="KW-1185">Reference proteome</keyword>
<keyword id="KW-0808">Transferase</keyword>
<keyword id="KW-0812">Transmembrane</keyword>
<keyword id="KW-1133">Transmembrane helix</keyword>